<evidence type="ECO:0000250" key="1">
    <source>
        <dbReference type="UniProtKB" id="P80321"/>
    </source>
</evidence>
<evidence type="ECO:0000269" key="2">
    <source>
    </source>
</evidence>
<evidence type="ECO:0000303" key="3">
    <source>
    </source>
</evidence>
<evidence type="ECO:0000305" key="4"/>
<sequence length="67" mass="7590">WPPVEGRPSCKRCGACTRMWPPEANRCVCDDIVPQCHEGCSKCEKVDTRSGKPLYQCQSFEYYNCAA</sequence>
<dbReference type="SMR" id="C0HLS6"/>
<dbReference type="GO" id="GO:0005576">
    <property type="term" value="C:extracellular region"/>
    <property type="evidence" value="ECO:0007669"/>
    <property type="project" value="InterPro"/>
</dbReference>
<dbReference type="GO" id="GO:0004867">
    <property type="term" value="F:serine-type endopeptidase inhibitor activity"/>
    <property type="evidence" value="ECO:0000314"/>
    <property type="project" value="UniProtKB"/>
</dbReference>
<dbReference type="GO" id="GO:0010951">
    <property type="term" value="P:negative regulation of endopeptidase activity"/>
    <property type="evidence" value="ECO:0000314"/>
    <property type="project" value="UniProtKB"/>
</dbReference>
<dbReference type="Gene3D" id="2.10.69.10">
    <property type="entry name" value="Cysteine Protease (Bromelain) Inhibitor, subunit H"/>
    <property type="match status" value="1"/>
</dbReference>
<dbReference type="InterPro" id="IPR035995">
    <property type="entry name" value="Bowman-Birk_prot_inh"/>
</dbReference>
<dbReference type="InterPro" id="IPR000877">
    <property type="entry name" value="Prot_inh_BBI"/>
</dbReference>
<dbReference type="Pfam" id="PF00228">
    <property type="entry name" value="Bowman-Birk_leg"/>
    <property type="match status" value="1"/>
</dbReference>
<dbReference type="SMART" id="SM00269">
    <property type="entry name" value="BowB"/>
    <property type="match status" value="1"/>
</dbReference>
<dbReference type="SUPFAM" id="SSF57247">
    <property type="entry name" value="Bowman-Birk inhibitor, BBI"/>
    <property type="match status" value="1"/>
</dbReference>
<name>IBBA4_HYAOR</name>
<protein>
    <recommendedName>
        <fullName evidence="3">Bowman-Birk type proteinase inhibitor A4</fullName>
        <shortName evidence="3">HOSPI-A4</shortName>
    </recommendedName>
</protein>
<reference key="1">
    <citation type="journal article" date="2021" name="Biochem. J.">
        <title>Isolation and functional diversity of Bowman-Birk type serine proteinase inhibitors from Hyacinthus orientalis.</title>
        <authorList>
            <person name="Aoki-Shioi N."/>
            <person name="Terada S."/>
            <person name="Hellinger R."/>
            <person name="Furuta Y."/>
            <person name="Gruber C.W."/>
        </authorList>
    </citation>
    <scope>PROTEIN SEQUENCE</scope>
    <scope>FUNCTION</scope>
    <scope>TISSUE SPECIFICITY</scope>
    <source>
        <tissue evidence="3">Bulb</tissue>
    </source>
</reference>
<proteinExistence type="evidence at protein level"/>
<keyword id="KW-0903">Direct protein sequencing</keyword>
<keyword id="KW-1015">Disulfide bond</keyword>
<keyword id="KW-0646">Protease inhibitor</keyword>
<keyword id="KW-0722">Serine protease inhibitor</keyword>
<organism>
    <name type="scientific">Hyacinthus orientalis</name>
    <name type="common">Common hyacinth</name>
    <dbReference type="NCBI Taxonomy" id="82025"/>
    <lineage>
        <taxon>Eukaryota</taxon>
        <taxon>Viridiplantae</taxon>
        <taxon>Streptophyta</taxon>
        <taxon>Embryophyta</taxon>
        <taxon>Tracheophyta</taxon>
        <taxon>Spermatophyta</taxon>
        <taxon>Magnoliopsida</taxon>
        <taxon>Liliopsida</taxon>
        <taxon>Asparagales</taxon>
        <taxon>Hyacinthaceae</taxon>
        <taxon>Hyacinthoideae</taxon>
        <taxon>Hyacintheae</taxon>
        <taxon>Hyacinthus</taxon>
    </lineage>
</organism>
<feature type="chain" id="PRO_0000452976" description="Bowman-Birk type proteinase inhibitor A4">
    <location>
        <begin position="1"/>
        <end position="67"/>
    </location>
</feature>
<feature type="site" description="Reactive bond for trypsin" evidence="1">
    <location>
        <begin position="18"/>
        <end position="19"/>
    </location>
</feature>
<feature type="disulfide bond" evidence="1">
    <location>
        <begin position="10"/>
        <end position="29"/>
    </location>
</feature>
<feature type="disulfide bond" evidence="1">
    <location>
        <begin position="16"/>
        <end position="27"/>
    </location>
</feature>
<feature type="disulfide bond" evidence="1">
    <location>
        <begin position="36"/>
        <end position="43"/>
    </location>
</feature>
<feature type="disulfide bond" evidence="1">
    <location>
        <begin position="40"/>
        <end position="57"/>
    </location>
</feature>
<comment type="function">
    <text evidence="2">Serine protease inhibitor (PubMed:33666645). Inhibits trypsin (Ki=12nM) and weakly inhibits chymotrypsin with (Ki=460nm) (PubMed:33666645). Does not inhibit bacterial subtilisin (PubMed:33666645).</text>
</comment>
<comment type="tissue specificity">
    <text evidence="2">Expressed in bulb (at protein level).</text>
</comment>
<comment type="similarity">
    <text evidence="4">Belongs to the Bowman-Birk serine protease inhibitor family.</text>
</comment>
<accession>C0HLS6</accession>